<feature type="chain" id="PRO_0000307303" description="Kinesin-like protein CG14535">
    <location>
        <begin position="1"/>
        <end position="1131"/>
    </location>
</feature>
<feature type="domain" description="Kinesin motor" evidence="1">
    <location>
        <begin position="44"/>
        <end position="396"/>
    </location>
</feature>
<feature type="region of interest" description="Disordered" evidence="2">
    <location>
        <begin position="1"/>
        <end position="25"/>
    </location>
</feature>
<feature type="region of interest" description="Disordered" evidence="2">
    <location>
        <begin position="472"/>
        <end position="494"/>
    </location>
</feature>
<feature type="region of interest" description="Disordered" evidence="2">
    <location>
        <begin position="693"/>
        <end position="753"/>
    </location>
</feature>
<feature type="region of interest" description="Disordered" evidence="2">
    <location>
        <begin position="905"/>
        <end position="926"/>
    </location>
</feature>
<feature type="region of interest" description="Disordered" evidence="2">
    <location>
        <begin position="1016"/>
        <end position="1072"/>
    </location>
</feature>
<feature type="compositionally biased region" description="Polar residues" evidence="2">
    <location>
        <begin position="1"/>
        <end position="11"/>
    </location>
</feature>
<feature type="compositionally biased region" description="Low complexity" evidence="2">
    <location>
        <begin position="483"/>
        <end position="494"/>
    </location>
</feature>
<feature type="compositionally biased region" description="Polar residues" evidence="2">
    <location>
        <begin position="1016"/>
        <end position="1032"/>
    </location>
</feature>
<gene>
    <name type="ORF">CG14535</name>
</gene>
<evidence type="ECO:0000255" key="1">
    <source>
        <dbReference type="PROSITE-ProRule" id="PRU00283"/>
    </source>
</evidence>
<evidence type="ECO:0000256" key="2">
    <source>
        <dbReference type="SAM" id="MobiDB-lite"/>
    </source>
</evidence>
<evidence type="ECO:0000305" key="3"/>
<reference key="1">
    <citation type="journal article" date="2000" name="Science">
        <title>The genome sequence of Drosophila melanogaster.</title>
        <authorList>
            <person name="Adams M.D."/>
            <person name="Celniker S.E."/>
            <person name="Holt R.A."/>
            <person name="Evans C.A."/>
            <person name="Gocayne J.D."/>
            <person name="Amanatides P.G."/>
            <person name="Scherer S.E."/>
            <person name="Li P.W."/>
            <person name="Hoskins R.A."/>
            <person name="Galle R.F."/>
            <person name="George R.A."/>
            <person name="Lewis S.E."/>
            <person name="Richards S."/>
            <person name="Ashburner M."/>
            <person name="Henderson S.N."/>
            <person name="Sutton G.G."/>
            <person name="Wortman J.R."/>
            <person name="Yandell M.D."/>
            <person name="Zhang Q."/>
            <person name="Chen L.X."/>
            <person name="Brandon R.C."/>
            <person name="Rogers Y.-H.C."/>
            <person name="Blazej R.G."/>
            <person name="Champe M."/>
            <person name="Pfeiffer B.D."/>
            <person name="Wan K.H."/>
            <person name="Doyle C."/>
            <person name="Baxter E.G."/>
            <person name="Helt G."/>
            <person name="Nelson C.R."/>
            <person name="Miklos G.L.G."/>
            <person name="Abril J.F."/>
            <person name="Agbayani A."/>
            <person name="An H.-J."/>
            <person name="Andrews-Pfannkoch C."/>
            <person name="Baldwin D."/>
            <person name="Ballew R.M."/>
            <person name="Basu A."/>
            <person name="Baxendale J."/>
            <person name="Bayraktaroglu L."/>
            <person name="Beasley E.M."/>
            <person name="Beeson K.Y."/>
            <person name="Benos P.V."/>
            <person name="Berman B.P."/>
            <person name="Bhandari D."/>
            <person name="Bolshakov S."/>
            <person name="Borkova D."/>
            <person name="Botchan M.R."/>
            <person name="Bouck J."/>
            <person name="Brokstein P."/>
            <person name="Brottier P."/>
            <person name="Burtis K.C."/>
            <person name="Busam D.A."/>
            <person name="Butler H."/>
            <person name="Cadieu E."/>
            <person name="Center A."/>
            <person name="Chandra I."/>
            <person name="Cherry J.M."/>
            <person name="Cawley S."/>
            <person name="Dahlke C."/>
            <person name="Davenport L.B."/>
            <person name="Davies P."/>
            <person name="de Pablos B."/>
            <person name="Delcher A."/>
            <person name="Deng Z."/>
            <person name="Mays A.D."/>
            <person name="Dew I."/>
            <person name="Dietz S.M."/>
            <person name="Dodson K."/>
            <person name="Doup L.E."/>
            <person name="Downes M."/>
            <person name="Dugan-Rocha S."/>
            <person name="Dunkov B.C."/>
            <person name="Dunn P."/>
            <person name="Durbin K.J."/>
            <person name="Evangelista C.C."/>
            <person name="Ferraz C."/>
            <person name="Ferriera S."/>
            <person name="Fleischmann W."/>
            <person name="Fosler C."/>
            <person name="Gabrielian A.E."/>
            <person name="Garg N.S."/>
            <person name="Gelbart W.M."/>
            <person name="Glasser K."/>
            <person name="Glodek A."/>
            <person name="Gong F."/>
            <person name="Gorrell J.H."/>
            <person name="Gu Z."/>
            <person name="Guan P."/>
            <person name="Harris M."/>
            <person name="Harris N.L."/>
            <person name="Harvey D.A."/>
            <person name="Heiman T.J."/>
            <person name="Hernandez J.R."/>
            <person name="Houck J."/>
            <person name="Hostin D."/>
            <person name="Houston K.A."/>
            <person name="Howland T.J."/>
            <person name="Wei M.-H."/>
            <person name="Ibegwam C."/>
            <person name="Jalali M."/>
            <person name="Kalush F."/>
            <person name="Karpen G.H."/>
            <person name="Ke Z."/>
            <person name="Kennison J.A."/>
            <person name="Ketchum K.A."/>
            <person name="Kimmel B.E."/>
            <person name="Kodira C.D."/>
            <person name="Kraft C.L."/>
            <person name="Kravitz S."/>
            <person name="Kulp D."/>
            <person name="Lai Z."/>
            <person name="Lasko P."/>
            <person name="Lei Y."/>
            <person name="Levitsky A.A."/>
            <person name="Li J.H."/>
            <person name="Li Z."/>
            <person name="Liang Y."/>
            <person name="Lin X."/>
            <person name="Liu X."/>
            <person name="Mattei B."/>
            <person name="McIntosh T.C."/>
            <person name="McLeod M.P."/>
            <person name="McPherson D."/>
            <person name="Merkulov G."/>
            <person name="Milshina N.V."/>
            <person name="Mobarry C."/>
            <person name="Morris J."/>
            <person name="Moshrefi A."/>
            <person name="Mount S.M."/>
            <person name="Moy M."/>
            <person name="Murphy B."/>
            <person name="Murphy L."/>
            <person name="Muzny D.M."/>
            <person name="Nelson D.L."/>
            <person name="Nelson D.R."/>
            <person name="Nelson K.A."/>
            <person name="Nixon K."/>
            <person name="Nusskern D.R."/>
            <person name="Pacleb J.M."/>
            <person name="Palazzolo M."/>
            <person name="Pittman G.S."/>
            <person name="Pan S."/>
            <person name="Pollard J."/>
            <person name="Puri V."/>
            <person name="Reese M.G."/>
            <person name="Reinert K."/>
            <person name="Remington K."/>
            <person name="Saunders R.D.C."/>
            <person name="Scheeler F."/>
            <person name="Shen H."/>
            <person name="Shue B.C."/>
            <person name="Siden-Kiamos I."/>
            <person name="Simpson M."/>
            <person name="Skupski M.P."/>
            <person name="Smith T.J."/>
            <person name="Spier E."/>
            <person name="Spradling A.C."/>
            <person name="Stapleton M."/>
            <person name="Strong R."/>
            <person name="Sun E."/>
            <person name="Svirskas R."/>
            <person name="Tector C."/>
            <person name="Turner R."/>
            <person name="Venter E."/>
            <person name="Wang A.H."/>
            <person name="Wang X."/>
            <person name="Wang Z.-Y."/>
            <person name="Wassarman D.A."/>
            <person name="Weinstock G.M."/>
            <person name="Weissenbach J."/>
            <person name="Williams S.M."/>
            <person name="Woodage T."/>
            <person name="Worley K.C."/>
            <person name="Wu D."/>
            <person name="Yang S."/>
            <person name="Yao Q.A."/>
            <person name="Ye J."/>
            <person name="Yeh R.-F."/>
            <person name="Zaveri J.S."/>
            <person name="Zhan M."/>
            <person name="Zhang G."/>
            <person name="Zhao Q."/>
            <person name="Zheng L."/>
            <person name="Zheng X.H."/>
            <person name="Zhong F.N."/>
            <person name="Zhong W."/>
            <person name="Zhou X."/>
            <person name="Zhu S.C."/>
            <person name="Zhu X."/>
            <person name="Smith H.O."/>
            <person name="Gibbs R.A."/>
            <person name="Myers E.W."/>
            <person name="Rubin G.M."/>
            <person name="Venter J.C."/>
        </authorList>
    </citation>
    <scope>NUCLEOTIDE SEQUENCE [LARGE SCALE GENOMIC DNA]</scope>
    <source>
        <strain>Berkeley</strain>
    </source>
</reference>
<reference key="2">
    <citation type="journal article" date="2002" name="Genome Biol.">
        <title>Annotation of the Drosophila melanogaster euchromatic genome: a systematic review.</title>
        <authorList>
            <person name="Misra S."/>
            <person name="Crosby M.A."/>
            <person name="Mungall C.J."/>
            <person name="Matthews B.B."/>
            <person name="Campbell K.S."/>
            <person name="Hradecky P."/>
            <person name="Huang Y."/>
            <person name="Kaminker J.S."/>
            <person name="Millburn G.H."/>
            <person name="Prochnik S.E."/>
            <person name="Smith C.D."/>
            <person name="Tupy J.L."/>
            <person name="Whitfield E.J."/>
            <person name="Bayraktaroglu L."/>
            <person name="Berman B.P."/>
            <person name="Bettencourt B.R."/>
            <person name="Celniker S.E."/>
            <person name="de Grey A.D.N.J."/>
            <person name="Drysdale R.A."/>
            <person name="Harris N.L."/>
            <person name="Richter J."/>
            <person name="Russo S."/>
            <person name="Schroeder A.J."/>
            <person name="Shu S.Q."/>
            <person name="Stapleton M."/>
            <person name="Yamada C."/>
            <person name="Ashburner M."/>
            <person name="Gelbart W.M."/>
            <person name="Rubin G.M."/>
            <person name="Lewis S.E."/>
        </authorList>
    </citation>
    <scope>GENOME REANNOTATION</scope>
    <source>
        <strain>Berkeley</strain>
    </source>
</reference>
<reference key="3">
    <citation type="submission" date="2006-10" db="EMBL/GenBank/DDBJ databases">
        <authorList>
            <person name="Stapleton M."/>
            <person name="Carlson J.W."/>
            <person name="Frise E."/>
            <person name="Kapadia B."/>
            <person name="Park S."/>
            <person name="Wan K.H."/>
            <person name="Yu C."/>
            <person name="Celniker S.E."/>
        </authorList>
    </citation>
    <scope>NUCLEOTIDE SEQUENCE [LARGE SCALE MRNA]</scope>
    <source>
        <strain>Berkeley</strain>
    </source>
</reference>
<organism>
    <name type="scientific">Drosophila melanogaster</name>
    <name type="common">Fruit fly</name>
    <dbReference type="NCBI Taxonomy" id="7227"/>
    <lineage>
        <taxon>Eukaryota</taxon>
        <taxon>Metazoa</taxon>
        <taxon>Ecdysozoa</taxon>
        <taxon>Arthropoda</taxon>
        <taxon>Hexapoda</taxon>
        <taxon>Insecta</taxon>
        <taxon>Pterygota</taxon>
        <taxon>Neoptera</taxon>
        <taxon>Endopterygota</taxon>
        <taxon>Diptera</taxon>
        <taxon>Brachycera</taxon>
        <taxon>Muscomorpha</taxon>
        <taxon>Ephydroidea</taxon>
        <taxon>Drosophilidae</taxon>
        <taxon>Drosophila</taxon>
        <taxon>Sophophora</taxon>
    </lineage>
</organism>
<protein>
    <recommendedName>
        <fullName>Kinesin-like protein CG14535</fullName>
    </recommendedName>
</protein>
<dbReference type="EMBL" id="AE014134">
    <property type="protein sequence ID" value="AAF52569.2"/>
    <property type="molecule type" value="Genomic_DNA"/>
</dbReference>
<dbReference type="EMBL" id="BT029102">
    <property type="protein sequence ID" value="ABJ17035.1"/>
    <property type="molecule type" value="mRNA"/>
</dbReference>
<dbReference type="RefSeq" id="NP_001285726.1">
    <property type="nucleotide sequence ID" value="NM_001298797.1"/>
</dbReference>
<dbReference type="RefSeq" id="NP_609156.1">
    <property type="nucleotide sequence ID" value="NM_135312.2"/>
</dbReference>
<dbReference type="SMR" id="Q9VLW2"/>
<dbReference type="BioGRID" id="60211">
    <property type="interactions" value="10"/>
</dbReference>
<dbReference type="FunCoup" id="Q9VLW2">
    <property type="interactions" value="25"/>
</dbReference>
<dbReference type="IntAct" id="Q9VLW2">
    <property type="interactions" value="10"/>
</dbReference>
<dbReference type="STRING" id="7227.FBpp0310067"/>
<dbReference type="PaxDb" id="7227-FBpp0079186"/>
<dbReference type="DNASU" id="34073"/>
<dbReference type="EnsemblMetazoa" id="FBtr0079564">
    <property type="protein sequence ID" value="FBpp0079186"/>
    <property type="gene ID" value="FBgn0031955"/>
</dbReference>
<dbReference type="EnsemblMetazoa" id="FBtr0343421">
    <property type="protein sequence ID" value="FBpp0310067"/>
    <property type="gene ID" value="FBgn0031955"/>
</dbReference>
<dbReference type="GeneID" id="34073"/>
<dbReference type="KEGG" id="dme:Dmel_CG14535"/>
<dbReference type="UCSC" id="CG14535-RA">
    <property type="organism name" value="d. melanogaster"/>
</dbReference>
<dbReference type="AGR" id="FB:FBgn0031955"/>
<dbReference type="FlyBase" id="FBgn0031955">
    <property type="gene designation" value="CG14535"/>
</dbReference>
<dbReference type="VEuPathDB" id="VectorBase:FBgn0031955"/>
<dbReference type="eggNOG" id="KOG4280">
    <property type="taxonomic scope" value="Eukaryota"/>
</dbReference>
<dbReference type="HOGENOM" id="CLU_008498_0_0_1"/>
<dbReference type="InParanoid" id="Q9VLW2"/>
<dbReference type="OMA" id="VIYMGPH"/>
<dbReference type="OrthoDB" id="8862460at2759"/>
<dbReference type="PhylomeDB" id="Q9VLW2"/>
<dbReference type="Reactome" id="R-DME-6811434">
    <property type="pathway name" value="COPI-dependent Golgi-to-ER retrograde traffic"/>
</dbReference>
<dbReference type="Reactome" id="R-DME-983189">
    <property type="pathway name" value="Kinesins"/>
</dbReference>
<dbReference type="BioGRID-ORCS" id="34073">
    <property type="hits" value="0 hits in 3 CRISPR screens"/>
</dbReference>
<dbReference type="GenomeRNAi" id="34073"/>
<dbReference type="PRO" id="PR:Q9VLW2"/>
<dbReference type="Proteomes" id="UP000000803">
    <property type="component" value="Chromosome 2L"/>
</dbReference>
<dbReference type="Bgee" id="FBgn0031955">
    <property type="expression patterns" value="Expressed in T neuron T4c (Drosophila) in embryonic/larval optic lobe (Drosophila) and 72 other cell types or tissues"/>
</dbReference>
<dbReference type="ExpressionAtlas" id="Q9VLW2">
    <property type="expression patterns" value="baseline and differential"/>
</dbReference>
<dbReference type="GO" id="GO:0005737">
    <property type="term" value="C:cytoplasm"/>
    <property type="evidence" value="ECO:0007669"/>
    <property type="project" value="UniProtKB-KW"/>
</dbReference>
<dbReference type="GO" id="GO:0005874">
    <property type="term" value="C:microtubule"/>
    <property type="evidence" value="ECO:0007669"/>
    <property type="project" value="UniProtKB-KW"/>
</dbReference>
<dbReference type="GO" id="GO:0005524">
    <property type="term" value="F:ATP binding"/>
    <property type="evidence" value="ECO:0007669"/>
    <property type="project" value="UniProtKB-KW"/>
</dbReference>
<dbReference type="GO" id="GO:0008017">
    <property type="term" value="F:microtubule binding"/>
    <property type="evidence" value="ECO:0000250"/>
    <property type="project" value="FlyBase"/>
</dbReference>
<dbReference type="FunFam" id="3.40.850.10:FF:000147">
    <property type="entry name" value="kinesin-like protein CG14535"/>
    <property type="match status" value="1"/>
</dbReference>
<dbReference type="Gene3D" id="3.40.850.10">
    <property type="entry name" value="Kinesin motor domain"/>
    <property type="match status" value="1"/>
</dbReference>
<dbReference type="InterPro" id="IPR027640">
    <property type="entry name" value="Kinesin-like_fam"/>
</dbReference>
<dbReference type="InterPro" id="IPR001752">
    <property type="entry name" value="Kinesin_motor_dom"/>
</dbReference>
<dbReference type="InterPro" id="IPR036961">
    <property type="entry name" value="Kinesin_motor_dom_sf"/>
</dbReference>
<dbReference type="InterPro" id="IPR027417">
    <property type="entry name" value="P-loop_NTPase"/>
</dbReference>
<dbReference type="PANTHER" id="PTHR21608">
    <property type="entry name" value="KINESIN-LIKE PROTEIN CG14535"/>
    <property type="match status" value="1"/>
</dbReference>
<dbReference type="PANTHER" id="PTHR21608:SF7">
    <property type="entry name" value="KINESIN-LIKE PROTEIN CG14535"/>
    <property type="match status" value="1"/>
</dbReference>
<dbReference type="Pfam" id="PF00225">
    <property type="entry name" value="Kinesin"/>
    <property type="match status" value="1"/>
</dbReference>
<dbReference type="SMART" id="SM00129">
    <property type="entry name" value="KISc"/>
    <property type="match status" value="1"/>
</dbReference>
<dbReference type="SUPFAM" id="SSF52540">
    <property type="entry name" value="P-loop containing nucleoside triphosphate hydrolases"/>
    <property type="match status" value="1"/>
</dbReference>
<dbReference type="PROSITE" id="PS50067">
    <property type="entry name" value="KINESIN_MOTOR_2"/>
    <property type="match status" value="1"/>
</dbReference>
<accession>Q9VLW2</accession>
<sequence length="1131" mass="120722">MATTSTSNMSRNGGFCGALQRAPPPMPPTLIRRLSSRECYGVGKVKVMLRVADRDRNSGGTEPDFMALDKKKRQVTLTDPRTACPPPQAAQERAPMVAAPKMFAFDNLFTGEDKQSDVCASALSEVIPAVLEGSDGCLLAMGYPATGQAQTVLGELGGGSGSGSASGSGVACSLGAAPCAIAWLYKGIQERRQKSGARFSVRVSAVGVSATKPDALSQDLLISHAAESDDSPGIYLRDDFLGGPTELRAPTAERAALFLDSALAGRLKSSGSTASGSSGCAAPLESALIFTLHVYQYSLSRKGGVAGGRSRLHIIDLGGCANRNGGLPLSGIGNILLAILSGQRHPPHKDHPLTPLLKDCLAPITCHVAIVAHVRPEQSYQDALSTIQIASRIHRLRRRKHRVPMPLAVGLAQGLGGNGSSAGSGADPSSSEISADTVIYMGPNDDATDGEHPPVYLPSLTAGDNRGVMSKALKGSGLEKPPSKSASNSPMMMKKAMAAEKAKKLPGSHTGSLKRQAGAGACSSPMIPHEQPQIQAMGSPIPIPRHMVSKGSMVPSPKGSPMRRAHPGAALEQLEAGMRKITEEQWIDGPRVSRAKVAEARHLMREVNHVKQCETWVDGPKSQSCRSLTACNLPAAGGSQTQGYGFMDAHKKTMIRQWVENQTTQVFQSTVSASNSPTALHWKLSQLKQKSLDLPDRPAFNPEPSLDLNQPCFESLPLLDPAPPDGDEDEDSGPSEVPPALPLLDDPLGSRDISQDNLHRMLSRHVSREQLHEAELVASRASSSHHPSQRSIDCGLQVTEEEIARTMSRDRDHDPSAHPLSALSHCDNISFVSSFNMACESFSECGERARQQFDQLARLHEIFTSQLAMAEVTPSAALFRTDIGSVFSEPVYHFNVGQSSVCSEPAYRLTPSPPKQPSHSPSQGSLPSLNGIMEIAGMDDYALLRQPDGASDPNLQKGEKRFTPQHDDICELDEKSMAAAVGKGNSLEDAQHKLNEITNILPLAAQSRLPLLPLNTSSEAYDSGHDSNSTPRTSKHSGISRRAESGYHSVATVRDSDESSFASGMSKGQRHRITVSGTGAVTSAGIGNYQRQCHKKRHRQDQAGNNKGLCNWLLTPFSCTYPETEGEISDF</sequence>
<proteinExistence type="evidence at transcript level"/>
<comment type="subcellular location">
    <subcellularLocation>
        <location evidence="3">Cytoplasm</location>
        <location evidence="3">Cytoskeleton</location>
    </subcellularLocation>
</comment>
<comment type="similarity">
    <text evidence="1">Belongs to the TRAFAC class myosin-kinesin ATPase superfamily. Kinesin family. KIF26 subfamily.</text>
</comment>
<keyword id="KW-0067">ATP-binding</keyword>
<keyword id="KW-0963">Cytoplasm</keyword>
<keyword id="KW-0206">Cytoskeleton</keyword>
<keyword id="KW-0493">Microtubule</keyword>
<keyword id="KW-0505">Motor protein</keyword>
<keyword id="KW-0547">Nucleotide-binding</keyword>
<keyword id="KW-1185">Reference proteome</keyword>
<name>KI26L_DROME</name>